<sequence length="34" mass="3570">MDSAISSPEIFIALVVAAHAAILALRLSVSLYRA</sequence>
<accession>Q3AWT0</accession>
<gene>
    <name evidence="1" type="primary">psaM</name>
    <name type="ordered locus">Syncc9902_1625</name>
</gene>
<proteinExistence type="inferred from homology"/>
<keyword id="KW-0472">Membrane</keyword>
<keyword id="KW-0602">Photosynthesis</keyword>
<keyword id="KW-0603">Photosystem I</keyword>
<keyword id="KW-1185">Reference proteome</keyword>
<keyword id="KW-0793">Thylakoid</keyword>
<keyword id="KW-0812">Transmembrane</keyword>
<keyword id="KW-1133">Transmembrane helix</keyword>
<reference key="1">
    <citation type="submission" date="2005-08" db="EMBL/GenBank/DDBJ databases">
        <title>Complete sequence of Synechococcus sp. CC9902.</title>
        <authorList>
            <person name="Copeland A."/>
            <person name="Lucas S."/>
            <person name="Lapidus A."/>
            <person name="Barry K."/>
            <person name="Detter J.C."/>
            <person name="Glavina T."/>
            <person name="Hammon N."/>
            <person name="Israni S."/>
            <person name="Pitluck S."/>
            <person name="Martinez M."/>
            <person name="Schmutz J."/>
            <person name="Larimer F."/>
            <person name="Land M."/>
            <person name="Kyrpides N."/>
            <person name="Ivanova N."/>
            <person name="Richardson P."/>
        </authorList>
    </citation>
    <scope>NUCLEOTIDE SEQUENCE [LARGE SCALE GENOMIC DNA]</scope>
    <source>
        <strain>CC9902</strain>
    </source>
</reference>
<name>PSAM_SYNS9</name>
<feature type="chain" id="PRO_0000277394" description="Photosystem I reaction center subunit XII">
    <location>
        <begin position="1"/>
        <end position="34"/>
    </location>
</feature>
<feature type="transmembrane region" description="Helical" evidence="1">
    <location>
        <begin position="5"/>
        <end position="25"/>
    </location>
</feature>
<dbReference type="EMBL" id="CP000097">
    <property type="protein sequence ID" value="ABB26583.1"/>
    <property type="status" value="ALT_INIT"/>
    <property type="molecule type" value="Genomic_DNA"/>
</dbReference>
<dbReference type="SMR" id="Q3AWT0"/>
<dbReference type="STRING" id="316279.Syncc9902_1625"/>
<dbReference type="KEGG" id="sye:Syncc9902_1625"/>
<dbReference type="eggNOG" id="ENOG50308RV">
    <property type="taxonomic scope" value="Bacteria"/>
</dbReference>
<dbReference type="HOGENOM" id="CLU_215773_1_0_3"/>
<dbReference type="Proteomes" id="UP000002712">
    <property type="component" value="Chromosome"/>
</dbReference>
<dbReference type="GO" id="GO:0009522">
    <property type="term" value="C:photosystem I"/>
    <property type="evidence" value="ECO:0007669"/>
    <property type="project" value="UniProtKB-KW"/>
</dbReference>
<dbReference type="GO" id="GO:0031676">
    <property type="term" value="C:plasma membrane-derived thylakoid membrane"/>
    <property type="evidence" value="ECO:0007669"/>
    <property type="project" value="UniProtKB-SubCell"/>
</dbReference>
<dbReference type="GO" id="GO:0015979">
    <property type="term" value="P:photosynthesis"/>
    <property type="evidence" value="ECO:0007669"/>
    <property type="project" value="UniProtKB-UniRule"/>
</dbReference>
<dbReference type="HAMAP" id="MF_00828">
    <property type="entry name" value="PSI_PsaM"/>
    <property type="match status" value="1"/>
</dbReference>
<dbReference type="InterPro" id="IPR010010">
    <property type="entry name" value="PSI_PsaM"/>
</dbReference>
<dbReference type="InterPro" id="IPR037279">
    <property type="entry name" value="PSI_PsaM_sf"/>
</dbReference>
<dbReference type="NCBIfam" id="TIGR03053">
    <property type="entry name" value="PS_I_psaM"/>
    <property type="match status" value="1"/>
</dbReference>
<dbReference type="Pfam" id="PF07465">
    <property type="entry name" value="PsaM"/>
    <property type="match status" value="1"/>
</dbReference>
<dbReference type="SUPFAM" id="SSF81548">
    <property type="entry name" value="Subunit XII of photosystem I reaction centre, PsaM"/>
    <property type="match status" value="1"/>
</dbReference>
<evidence type="ECO:0000255" key="1">
    <source>
        <dbReference type="HAMAP-Rule" id="MF_00828"/>
    </source>
</evidence>
<evidence type="ECO:0000305" key="2"/>
<protein>
    <recommendedName>
        <fullName evidence="1">Photosystem I reaction center subunit XII</fullName>
    </recommendedName>
    <alternativeName>
        <fullName evidence="1">PSI-M</fullName>
    </alternativeName>
</protein>
<organism>
    <name type="scientific">Synechococcus sp. (strain CC9902)</name>
    <dbReference type="NCBI Taxonomy" id="316279"/>
    <lineage>
        <taxon>Bacteria</taxon>
        <taxon>Bacillati</taxon>
        <taxon>Cyanobacteriota</taxon>
        <taxon>Cyanophyceae</taxon>
        <taxon>Synechococcales</taxon>
        <taxon>Synechococcaceae</taxon>
        <taxon>Synechococcus</taxon>
    </lineage>
</organism>
<comment type="subcellular location">
    <subcellularLocation>
        <location evidence="1">Cellular thylakoid membrane</location>
        <topology evidence="1">Single-pass membrane protein</topology>
    </subcellularLocation>
</comment>
<comment type="similarity">
    <text evidence="1">Belongs to the PsaM family.</text>
</comment>
<comment type="sequence caution" evidence="2">
    <conflict type="erroneous initiation">
        <sequence resource="EMBL-CDS" id="ABB26583"/>
    </conflict>
    <text>Extended N-terminus.</text>
</comment>